<organism>
    <name type="scientific">Aeromonas hydrophila subsp. hydrophila (strain ATCC 7966 / DSM 30187 / BCRC 13018 / CCUG 14551 / JCM 1027 / KCTC 2358 / NCIMB 9240 / NCTC 8049)</name>
    <dbReference type="NCBI Taxonomy" id="380703"/>
    <lineage>
        <taxon>Bacteria</taxon>
        <taxon>Pseudomonadati</taxon>
        <taxon>Pseudomonadota</taxon>
        <taxon>Gammaproteobacteria</taxon>
        <taxon>Aeromonadales</taxon>
        <taxon>Aeromonadaceae</taxon>
        <taxon>Aeromonas</taxon>
    </lineage>
</organism>
<protein>
    <recommendedName>
        <fullName evidence="1">1-deoxy-D-xylulose 5-phosphate reductoisomerase</fullName>
        <shortName evidence="1">DXP reductoisomerase</shortName>
        <ecNumber evidence="1">1.1.1.267</ecNumber>
    </recommendedName>
    <alternativeName>
        <fullName evidence="1">1-deoxyxylulose-5-phosphate reductoisomerase</fullName>
    </alternativeName>
    <alternativeName>
        <fullName evidence="1">2-C-methyl-D-erythritol 4-phosphate synthase</fullName>
    </alternativeName>
</protein>
<proteinExistence type="inferred from homology"/>
<gene>
    <name evidence="1" type="primary">dxr</name>
    <name type="ordered locus">AHA_1179</name>
</gene>
<comment type="function">
    <text evidence="1">Catalyzes the NADPH-dependent rearrangement and reduction of 1-deoxy-D-xylulose-5-phosphate (DXP) to 2-C-methyl-D-erythritol 4-phosphate (MEP).</text>
</comment>
<comment type="catalytic activity">
    <reaction evidence="1">
        <text>2-C-methyl-D-erythritol 4-phosphate + NADP(+) = 1-deoxy-D-xylulose 5-phosphate + NADPH + H(+)</text>
        <dbReference type="Rhea" id="RHEA:13717"/>
        <dbReference type="ChEBI" id="CHEBI:15378"/>
        <dbReference type="ChEBI" id="CHEBI:57783"/>
        <dbReference type="ChEBI" id="CHEBI:57792"/>
        <dbReference type="ChEBI" id="CHEBI:58262"/>
        <dbReference type="ChEBI" id="CHEBI:58349"/>
        <dbReference type="EC" id="1.1.1.267"/>
    </reaction>
    <physiologicalReaction direction="right-to-left" evidence="1">
        <dbReference type="Rhea" id="RHEA:13719"/>
    </physiologicalReaction>
</comment>
<comment type="cofactor">
    <cofactor evidence="1">
        <name>Mg(2+)</name>
        <dbReference type="ChEBI" id="CHEBI:18420"/>
    </cofactor>
    <cofactor evidence="1">
        <name>Mn(2+)</name>
        <dbReference type="ChEBI" id="CHEBI:29035"/>
    </cofactor>
</comment>
<comment type="pathway">
    <text evidence="1">Isoprenoid biosynthesis; isopentenyl diphosphate biosynthesis via DXP pathway; isopentenyl diphosphate from 1-deoxy-D-xylulose 5-phosphate: step 1/6.</text>
</comment>
<comment type="similarity">
    <text evidence="1">Belongs to the DXR family.</text>
</comment>
<keyword id="KW-0414">Isoprene biosynthesis</keyword>
<keyword id="KW-0464">Manganese</keyword>
<keyword id="KW-0479">Metal-binding</keyword>
<keyword id="KW-0521">NADP</keyword>
<keyword id="KW-0560">Oxidoreductase</keyword>
<keyword id="KW-1185">Reference proteome</keyword>
<sequence>MHNLVILGASGSIGQSTLKVLRHNPGRWQVLALTAARSVEAMLRDCLEFSPRFAVMVDEAAASELAAQLKTHGSATRVMAGPAALCEVAAHPDAHSVMAAIVGAAGLAPTMAAVRAGKRILLANKEALVMSGAFFMEAVREHGAELLPIDSEHNAIFQCLPEAIQRQPGFCDLAGAGISKILLTGSGGPFRYTDIGELAHVTPAQAIAHPNWSMGAKISVDSATMINKGLEYIEARWLFNAAPEQIQVVIHPQSVIHSMVQYKDGSVLAQLGNPDMCTPIAHALAYPARVESGVEPLDFFSVGEFSFIRPDYERYPCLQLAMHACQQGQAATTALNAANEEAVAAFLAERIGFMDIARVNEATMLALGGTAAGSLDDLIALDGAARARAHNLIEELS</sequence>
<feature type="chain" id="PRO_1000020211" description="1-deoxy-D-xylulose 5-phosphate reductoisomerase">
    <location>
        <begin position="1"/>
        <end position="397"/>
    </location>
</feature>
<feature type="binding site" evidence="1">
    <location>
        <position position="10"/>
    </location>
    <ligand>
        <name>NADPH</name>
        <dbReference type="ChEBI" id="CHEBI:57783"/>
    </ligand>
</feature>
<feature type="binding site" evidence="1">
    <location>
        <position position="11"/>
    </location>
    <ligand>
        <name>NADPH</name>
        <dbReference type="ChEBI" id="CHEBI:57783"/>
    </ligand>
</feature>
<feature type="binding site" evidence="1">
    <location>
        <position position="12"/>
    </location>
    <ligand>
        <name>NADPH</name>
        <dbReference type="ChEBI" id="CHEBI:57783"/>
    </ligand>
</feature>
<feature type="binding site" evidence="1">
    <location>
        <position position="13"/>
    </location>
    <ligand>
        <name>NADPH</name>
        <dbReference type="ChEBI" id="CHEBI:57783"/>
    </ligand>
</feature>
<feature type="binding site" evidence="1">
    <location>
        <position position="36"/>
    </location>
    <ligand>
        <name>NADPH</name>
        <dbReference type="ChEBI" id="CHEBI:57783"/>
    </ligand>
</feature>
<feature type="binding site" evidence="1">
    <location>
        <position position="37"/>
    </location>
    <ligand>
        <name>NADPH</name>
        <dbReference type="ChEBI" id="CHEBI:57783"/>
    </ligand>
</feature>
<feature type="binding site" evidence="1">
    <location>
        <position position="124"/>
    </location>
    <ligand>
        <name>NADPH</name>
        <dbReference type="ChEBI" id="CHEBI:57783"/>
    </ligand>
</feature>
<feature type="binding site" evidence="1">
    <location>
        <position position="125"/>
    </location>
    <ligand>
        <name>1-deoxy-D-xylulose 5-phosphate</name>
        <dbReference type="ChEBI" id="CHEBI:57792"/>
    </ligand>
</feature>
<feature type="binding site" evidence="1">
    <location>
        <position position="126"/>
    </location>
    <ligand>
        <name>NADPH</name>
        <dbReference type="ChEBI" id="CHEBI:57783"/>
    </ligand>
</feature>
<feature type="binding site" evidence="1">
    <location>
        <position position="150"/>
    </location>
    <ligand>
        <name>Mn(2+)</name>
        <dbReference type="ChEBI" id="CHEBI:29035"/>
    </ligand>
</feature>
<feature type="binding site" evidence="1">
    <location>
        <position position="151"/>
    </location>
    <ligand>
        <name>1-deoxy-D-xylulose 5-phosphate</name>
        <dbReference type="ChEBI" id="CHEBI:57792"/>
    </ligand>
</feature>
<feature type="binding site" evidence="1">
    <location>
        <position position="152"/>
    </location>
    <ligand>
        <name>1-deoxy-D-xylulose 5-phosphate</name>
        <dbReference type="ChEBI" id="CHEBI:57792"/>
    </ligand>
</feature>
<feature type="binding site" evidence="1">
    <location>
        <position position="152"/>
    </location>
    <ligand>
        <name>Mn(2+)</name>
        <dbReference type="ChEBI" id="CHEBI:29035"/>
    </ligand>
</feature>
<feature type="binding site" evidence="1">
    <location>
        <position position="186"/>
    </location>
    <ligand>
        <name>1-deoxy-D-xylulose 5-phosphate</name>
        <dbReference type="ChEBI" id="CHEBI:57792"/>
    </ligand>
</feature>
<feature type="binding site" evidence="1">
    <location>
        <position position="209"/>
    </location>
    <ligand>
        <name>1-deoxy-D-xylulose 5-phosphate</name>
        <dbReference type="ChEBI" id="CHEBI:57792"/>
    </ligand>
</feature>
<feature type="binding site" evidence="1">
    <location>
        <position position="215"/>
    </location>
    <ligand>
        <name>NADPH</name>
        <dbReference type="ChEBI" id="CHEBI:57783"/>
    </ligand>
</feature>
<feature type="binding site" evidence="1">
    <location>
        <position position="222"/>
    </location>
    <ligand>
        <name>1-deoxy-D-xylulose 5-phosphate</name>
        <dbReference type="ChEBI" id="CHEBI:57792"/>
    </ligand>
</feature>
<feature type="binding site" evidence="1">
    <location>
        <position position="227"/>
    </location>
    <ligand>
        <name>1-deoxy-D-xylulose 5-phosphate</name>
        <dbReference type="ChEBI" id="CHEBI:57792"/>
    </ligand>
</feature>
<feature type="binding site" evidence="1">
    <location>
        <position position="228"/>
    </location>
    <ligand>
        <name>1-deoxy-D-xylulose 5-phosphate</name>
        <dbReference type="ChEBI" id="CHEBI:57792"/>
    </ligand>
</feature>
<feature type="binding site" evidence="1">
    <location>
        <position position="231"/>
    </location>
    <ligand>
        <name>1-deoxy-D-xylulose 5-phosphate</name>
        <dbReference type="ChEBI" id="CHEBI:57792"/>
    </ligand>
</feature>
<feature type="binding site" evidence="1">
    <location>
        <position position="231"/>
    </location>
    <ligand>
        <name>Mn(2+)</name>
        <dbReference type="ChEBI" id="CHEBI:29035"/>
    </ligand>
</feature>
<dbReference type="EC" id="1.1.1.267" evidence="1"/>
<dbReference type="EMBL" id="CP000462">
    <property type="protein sequence ID" value="ABK37195.1"/>
    <property type="molecule type" value="Genomic_DNA"/>
</dbReference>
<dbReference type="RefSeq" id="WP_011705098.1">
    <property type="nucleotide sequence ID" value="NC_008570.1"/>
</dbReference>
<dbReference type="RefSeq" id="YP_855720.1">
    <property type="nucleotide sequence ID" value="NC_008570.1"/>
</dbReference>
<dbReference type="SMR" id="A0KHG9"/>
<dbReference type="STRING" id="380703.AHA_1179"/>
<dbReference type="EnsemblBacteria" id="ABK37195">
    <property type="protein sequence ID" value="ABK37195"/>
    <property type="gene ID" value="AHA_1179"/>
</dbReference>
<dbReference type="GeneID" id="4487254"/>
<dbReference type="KEGG" id="aha:AHA_1179"/>
<dbReference type="PATRIC" id="fig|380703.7.peg.1186"/>
<dbReference type="eggNOG" id="COG0743">
    <property type="taxonomic scope" value="Bacteria"/>
</dbReference>
<dbReference type="HOGENOM" id="CLU_035714_4_0_6"/>
<dbReference type="OrthoDB" id="9806546at2"/>
<dbReference type="UniPathway" id="UPA00056">
    <property type="reaction ID" value="UER00092"/>
</dbReference>
<dbReference type="Proteomes" id="UP000000756">
    <property type="component" value="Chromosome"/>
</dbReference>
<dbReference type="GO" id="GO:0030604">
    <property type="term" value="F:1-deoxy-D-xylulose-5-phosphate reductoisomerase activity"/>
    <property type="evidence" value="ECO:0007669"/>
    <property type="project" value="UniProtKB-UniRule"/>
</dbReference>
<dbReference type="GO" id="GO:0030145">
    <property type="term" value="F:manganese ion binding"/>
    <property type="evidence" value="ECO:0007669"/>
    <property type="project" value="TreeGrafter"/>
</dbReference>
<dbReference type="GO" id="GO:0070402">
    <property type="term" value="F:NADPH binding"/>
    <property type="evidence" value="ECO:0007669"/>
    <property type="project" value="InterPro"/>
</dbReference>
<dbReference type="GO" id="GO:0051484">
    <property type="term" value="P:isopentenyl diphosphate biosynthetic process, methylerythritol 4-phosphate pathway involved in terpenoid biosynthetic process"/>
    <property type="evidence" value="ECO:0007669"/>
    <property type="project" value="TreeGrafter"/>
</dbReference>
<dbReference type="FunFam" id="1.10.1740.10:FF:000004">
    <property type="entry name" value="1-deoxy-D-xylulose 5-phosphate reductoisomerase"/>
    <property type="match status" value="1"/>
</dbReference>
<dbReference type="FunFam" id="3.40.50.720:FF:000045">
    <property type="entry name" value="1-deoxy-D-xylulose 5-phosphate reductoisomerase"/>
    <property type="match status" value="1"/>
</dbReference>
<dbReference type="Gene3D" id="1.10.1740.10">
    <property type="match status" value="1"/>
</dbReference>
<dbReference type="Gene3D" id="3.40.50.720">
    <property type="entry name" value="NAD(P)-binding Rossmann-like Domain"/>
    <property type="match status" value="1"/>
</dbReference>
<dbReference type="HAMAP" id="MF_00183">
    <property type="entry name" value="DXP_reductoisom"/>
    <property type="match status" value="1"/>
</dbReference>
<dbReference type="InterPro" id="IPR003821">
    <property type="entry name" value="DXP_reductoisomerase"/>
</dbReference>
<dbReference type="InterPro" id="IPR013644">
    <property type="entry name" value="DXP_reductoisomerase_C"/>
</dbReference>
<dbReference type="InterPro" id="IPR013512">
    <property type="entry name" value="DXP_reductoisomerase_N"/>
</dbReference>
<dbReference type="InterPro" id="IPR026877">
    <property type="entry name" value="DXPR_C"/>
</dbReference>
<dbReference type="InterPro" id="IPR036169">
    <property type="entry name" value="DXPR_C_sf"/>
</dbReference>
<dbReference type="InterPro" id="IPR036291">
    <property type="entry name" value="NAD(P)-bd_dom_sf"/>
</dbReference>
<dbReference type="NCBIfam" id="TIGR00243">
    <property type="entry name" value="Dxr"/>
    <property type="match status" value="1"/>
</dbReference>
<dbReference type="NCBIfam" id="NF003938">
    <property type="entry name" value="PRK05447.1-1"/>
    <property type="match status" value="1"/>
</dbReference>
<dbReference type="NCBIfam" id="NF009114">
    <property type="entry name" value="PRK12464.1"/>
    <property type="match status" value="1"/>
</dbReference>
<dbReference type="PANTHER" id="PTHR30525">
    <property type="entry name" value="1-DEOXY-D-XYLULOSE 5-PHOSPHATE REDUCTOISOMERASE"/>
    <property type="match status" value="1"/>
</dbReference>
<dbReference type="PANTHER" id="PTHR30525:SF0">
    <property type="entry name" value="1-DEOXY-D-XYLULOSE 5-PHOSPHATE REDUCTOISOMERASE, CHLOROPLASTIC"/>
    <property type="match status" value="1"/>
</dbReference>
<dbReference type="Pfam" id="PF08436">
    <property type="entry name" value="DXP_redisom_C"/>
    <property type="match status" value="1"/>
</dbReference>
<dbReference type="Pfam" id="PF02670">
    <property type="entry name" value="DXP_reductoisom"/>
    <property type="match status" value="1"/>
</dbReference>
<dbReference type="Pfam" id="PF13288">
    <property type="entry name" value="DXPR_C"/>
    <property type="match status" value="1"/>
</dbReference>
<dbReference type="PIRSF" id="PIRSF006205">
    <property type="entry name" value="Dxp_reductismrs"/>
    <property type="match status" value="1"/>
</dbReference>
<dbReference type="SUPFAM" id="SSF69055">
    <property type="entry name" value="1-deoxy-D-xylulose-5-phosphate reductoisomerase, C-terminal domain"/>
    <property type="match status" value="1"/>
</dbReference>
<dbReference type="SUPFAM" id="SSF55347">
    <property type="entry name" value="Glyceraldehyde-3-phosphate dehydrogenase-like, C-terminal domain"/>
    <property type="match status" value="1"/>
</dbReference>
<dbReference type="SUPFAM" id="SSF51735">
    <property type="entry name" value="NAD(P)-binding Rossmann-fold domains"/>
    <property type="match status" value="1"/>
</dbReference>
<name>DXR_AERHH</name>
<accession>A0KHG9</accession>
<reference key="1">
    <citation type="journal article" date="2006" name="J. Bacteriol.">
        <title>Genome sequence of Aeromonas hydrophila ATCC 7966T: jack of all trades.</title>
        <authorList>
            <person name="Seshadri R."/>
            <person name="Joseph S.W."/>
            <person name="Chopra A.K."/>
            <person name="Sha J."/>
            <person name="Shaw J."/>
            <person name="Graf J."/>
            <person name="Haft D.H."/>
            <person name="Wu M."/>
            <person name="Ren Q."/>
            <person name="Rosovitz M.J."/>
            <person name="Madupu R."/>
            <person name="Tallon L."/>
            <person name="Kim M."/>
            <person name="Jin S."/>
            <person name="Vuong H."/>
            <person name="Stine O.C."/>
            <person name="Ali A."/>
            <person name="Horneman A.J."/>
            <person name="Heidelberg J.F."/>
        </authorList>
    </citation>
    <scope>NUCLEOTIDE SEQUENCE [LARGE SCALE GENOMIC DNA]</scope>
    <source>
        <strain>ATCC 7966 / DSM 30187 / BCRC 13018 / CCUG 14551 / JCM 1027 / KCTC 2358 / NCIMB 9240 / NCTC 8049</strain>
    </source>
</reference>
<evidence type="ECO:0000255" key="1">
    <source>
        <dbReference type="HAMAP-Rule" id="MF_00183"/>
    </source>
</evidence>